<organism>
    <name type="scientific">Aspergillus terreus (strain NIH 2624 / FGSC A1156)</name>
    <dbReference type="NCBI Taxonomy" id="341663"/>
    <lineage>
        <taxon>Eukaryota</taxon>
        <taxon>Fungi</taxon>
        <taxon>Dikarya</taxon>
        <taxon>Ascomycota</taxon>
        <taxon>Pezizomycotina</taxon>
        <taxon>Eurotiomycetes</taxon>
        <taxon>Eurotiomycetidae</taxon>
        <taxon>Eurotiales</taxon>
        <taxon>Aspergillaceae</taxon>
        <taxon>Aspergillus</taxon>
        <taxon>Aspergillus subgen. Circumdati</taxon>
    </lineage>
</organism>
<keyword id="KW-0186">Copper</keyword>
<keyword id="KW-0479">Metal-binding</keyword>
<keyword id="KW-0560">Oxidoreductase</keyword>
<keyword id="KW-1185">Reference proteome</keyword>
<keyword id="KW-0677">Repeat</keyword>
<reference key="1">
    <citation type="submission" date="2005-09" db="EMBL/GenBank/DDBJ databases">
        <title>Annotation of the Aspergillus terreus NIH2624 genome.</title>
        <authorList>
            <person name="Birren B.W."/>
            <person name="Lander E.S."/>
            <person name="Galagan J.E."/>
            <person name="Nusbaum C."/>
            <person name="Devon K."/>
            <person name="Henn M."/>
            <person name="Ma L.-J."/>
            <person name="Jaffe D.B."/>
            <person name="Butler J."/>
            <person name="Alvarez P."/>
            <person name="Gnerre S."/>
            <person name="Grabherr M."/>
            <person name="Kleber M."/>
            <person name="Mauceli E.W."/>
            <person name="Brockman W."/>
            <person name="Rounsley S."/>
            <person name="Young S.K."/>
            <person name="LaButti K."/>
            <person name="Pushparaj V."/>
            <person name="DeCaprio D."/>
            <person name="Crawford M."/>
            <person name="Koehrsen M."/>
            <person name="Engels R."/>
            <person name="Montgomery P."/>
            <person name="Pearson M."/>
            <person name="Howarth C."/>
            <person name="Larson L."/>
            <person name="Luoma S."/>
            <person name="White J."/>
            <person name="Alvarado L."/>
            <person name="Kodira C.D."/>
            <person name="Zeng Q."/>
            <person name="Oleary S."/>
            <person name="Yandava C."/>
            <person name="Denning D.W."/>
            <person name="Nierman W.C."/>
            <person name="Milne T."/>
            <person name="Madden K."/>
        </authorList>
    </citation>
    <scope>NUCLEOTIDE SEQUENCE [LARGE SCALE GENOMIC DNA]</scope>
    <source>
        <strain>NIH 2624 / FGSC A1156</strain>
    </source>
</reference>
<reference key="2">
    <citation type="journal article" date="2004" name="Cell. Mol. Life Sci.">
        <title>Terrein: a new melanogenesis inhibitor and its mechanism.</title>
        <authorList>
            <person name="Park S.H."/>
            <person name="Kim D.S."/>
            <person name="Kim W.G."/>
            <person name="Ryoo I.J."/>
            <person name="Lee D.H."/>
            <person name="Huh C.H."/>
            <person name="Youn S.W."/>
            <person name="Yoo I.D."/>
            <person name="Park K.C."/>
        </authorList>
    </citation>
    <scope>BIOTECHNOLOGY</scope>
</reference>
<reference key="3">
    <citation type="journal article" date="2005" name="Bioorg. Med. Chem. Lett.">
        <title>Synthesis and melanin biosynthesis inhibitory activity of (+/-)-terrein produced by Penicillium sp. 20135.</title>
        <authorList>
            <person name="Lee S."/>
            <person name="Kim W.G."/>
            <person name="Kim E."/>
            <person name="Ryoo I.J."/>
            <person name="Lee H.K."/>
            <person name="Kim J.N."/>
            <person name="Jung S.H."/>
            <person name="Yoo I.D."/>
        </authorList>
    </citation>
    <scope>BIOTECHNOLOGY</scope>
</reference>
<reference key="4">
    <citation type="journal article" date="2008" name="J. Antibiot.">
        <title>A new terrein glucoside, a novel inhibitor of angiogenin secretion in tumor angiogenesis.</title>
        <authorList>
            <person name="Arakawa M."/>
            <person name="Someno T."/>
            <person name="Kawada M."/>
            <person name="Ikeda D."/>
        </authorList>
    </citation>
    <scope>BIOTECHNOLOGY</scope>
</reference>
<reference key="5">
    <citation type="journal article" date="2008" name="J. Endod.">
        <title>Terrein reduces pulpal inflammation in human dental pulp cells.</title>
        <authorList>
            <person name="Lee J.C."/>
            <person name="Yu M.K."/>
            <person name="Lee R."/>
            <person name="Lee Y.H."/>
            <person name="Jeon J.G."/>
            <person name="Lee M.H."/>
            <person name="Jhee E.C."/>
            <person name="Yoo I.D."/>
            <person name="Yi H.K."/>
        </authorList>
    </citation>
    <scope>BIOTECHNOLOGY</scope>
</reference>
<reference key="6">
    <citation type="journal article" date="2009" name="Exp. Dermatol.">
        <title>Long-term suppression of tyrosinase by terrein via tyrosinase degradation and its decreased expression.</title>
        <authorList>
            <person name="Park S.H."/>
            <person name="Kim D.S."/>
            <person name="Lee H.K."/>
            <person name="Kwon S.B."/>
            <person name="Lee S."/>
            <person name="Ryoo I.J."/>
            <person name="Kim W.G."/>
            <person name="Yoo I.D."/>
            <person name="Park K.C."/>
        </authorList>
    </citation>
    <scope>BIOTECHNOLOGY</scope>
</reference>
<reference key="7">
    <citation type="journal article" date="2010" name="Cell Biochem. Funct.">
        <title>Enhancement of osteoblast biocompatibility on titanium surface with Terrein treatment.</title>
        <authorList>
            <person name="Lee Y.H."/>
            <person name="Lee N.H."/>
            <person name="Bhattarai G."/>
            <person name="Oh Y.T."/>
            <person name="Yu M.K."/>
            <person name="Yoo I.D."/>
            <person name="Jhee E.C."/>
            <person name="Yi H.K."/>
        </authorList>
    </citation>
    <scope>BIOTECHNOLOGY</scope>
</reference>
<reference key="8">
    <citation type="journal article" date="2013" name="Oncol. Rep.">
        <title>Terrein induces apoptosis in HeLa human cervical carcinoma cells through p53 and ERK regulation.</title>
        <authorList>
            <person name="Porameesanaporn Y."/>
            <person name="Uthaisang-Tanechpongtamb W."/>
            <person name="Jarintanan F."/>
            <person name="Jongrungruangchok S."/>
            <person name="Thanomsub Wongsatayanon B."/>
        </authorList>
    </citation>
    <scope>BIOTECHNOLOGY</scope>
</reference>
<reference key="9">
    <citation type="journal article" date="2014" name="Chem. Biol.">
        <title>Terrein biosynthesis in Aspergillus terreus and its impact on phytotoxicity.</title>
        <authorList>
            <person name="Zaehle C."/>
            <person name="Gressler M."/>
            <person name="Shelest E."/>
            <person name="Geib E."/>
            <person name="Hertweck C."/>
            <person name="Brock M."/>
        </authorList>
    </citation>
    <scope>FUNCTION</scope>
    <scope>DISRUPTION PHENOTYPE</scope>
</reference>
<reference key="10">
    <citation type="journal article" date="2014" name="Int. J. Mol. Med.">
        <title>The marine-derived fungal metabolite, terrein, inhibits cell proliferation and induces cell cycle arrest in human ovarian cancer cells.</title>
        <authorList>
            <person name="Chen Y.F."/>
            <person name="Wang S.Y."/>
            <person name="Shen H."/>
            <person name="Yao X.F."/>
            <person name="Zhang F.L."/>
            <person name="Lai D."/>
        </authorList>
    </citation>
    <scope>BIOTECHNOLOGY</scope>
</reference>
<reference key="11">
    <citation type="journal article" date="2015" name="Cell Biochem. Funct.">
        <title>Terrein reduces age-related inflammation induced by oxidative stress through Nrf2/ERK1/2/HO-1 signalling in aged HDF cells.</title>
        <authorList>
            <person name="Lee Y.H."/>
            <person name="Lee S.J."/>
            <person name="Jung J.E."/>
            <person name="Kim J.S."/>
            <person name="Lee N.H."/>
            <person name="Yi H.K."/>
        </authorList>
    </citation>
    <scope>BIOTECHNOLOGY</scope>
</reference>
<reference key="12">
    <citation type="journal article" date="2015" name="Front. Microbiol.">
        <title>A new high-performance heterologous fungal expression system based on regulatory elements from the Aspergillus terreus terrein gene cluster.</title>
        <authorList>
            <person name="Gressler M."/>
            <person name="Hortschansky P."/>
            <person name="Geib E."/>
            <person name="Brock M."/>
        </authorList>
    </citation>
    <scope>INDUCTION</scope>
</reference>
<reference key="13">
    <citation type="journal article" date="2015" name="Oncol. Rep.">
        <title>(+)-Terrein inhibits human hepatoma Bel-7402 proliferation through cell cycle arrest.</title>
        <authorList>
            <person name="Zhang F."/>
            <person name="Mijiti M."/>
            <person name="Ding W."/>
            <person name="Song J."/>
            <person name="Yin Y."/>
            <person name="Sun W."/>
            <person name="Li Z."/>
        </authorList>
    </citation>
    <scope>BIOTECHNOLOGY</scope>
</reference>
<reference key="14">
    <citation type="journal article" date="2016" name="Anticancer Res.">
        <title>Synthetic terrein inhibits progression of head and neck cancer by suppressing angiogenin production.</title>
        <authorList>
            <person name="Shibata A."/>
            <person name="Ibaragi S."/>
            <person name="Mandai H."/>
            <person name="Tsumura T."/>
            <person name="Kishimoto K."/>
            <person name="Okui T."/>
            <person name="Hassan N.M."/>
            <person name="Shimo T."/>
            <person name="Omori K."/>
            <person name="Hu G.F."/>
            <person name="Takashiba S."/>
            <person name="Suga S."/>
            <person name="Sasaki A."/>
        </authorList>
    </citation>
    <scope>BIOTECHNOLOGY</scope>
</reference>
<dbReference type="EC" id="1.-.-.-" evidence="19"/>
<dbReference type="EMBL" id="CH476594">
    <property type="protein sequence ID" value="EAU38787.1"/>
    <property type="molecule type" value="Genomic_DNA"/>
</dbReference>
<dbReference type="RefSeq" id="XP_001210227.1">
    <property type="nucleotide sequence ID" value="XM_001210227.1"/>
</dbReference>
<dbReference type="SMR" id="Q0D1P3"/>
<dbReference type="STRING" id="341663.Q0D1P3"/>
<dbReference type="EnsemblFungi" id="EAU38787">
    <property type="protein sequence ID" value="EAU38787"/>
    <property type="gene ID" value="ATEG_00141"/>
</dbReference>
<dbReference type="GeneID" id="4354898"/>
<dbReference type="VEuPathDB" id="FungiDB:ATEG_00141"/>
<dbReference type="eggNOG" id="KOG1263">
    <property type="taxonomic scope" value="Eukaryota"/>
</dbReference>
<dbReference type="HOGENOM" id="CLU_006504_8_3_1"/>
<dbReference type="OMA" id="QVANNFT"/>
<dbReference type="OrthoDB" id="2121828at2759"/>
<dbReference type="Proteomes" id="UP000007963">
    <property type="component" value="Unassembled WGS sequence"/>
</dbReference>
<dbReference type="GO" id="GO:0005507">
    <property type="term" value="F:copper ion binding"/>
    <property type="evidence" value="ECO:0007669"/>
    <property type="project" value="InterPro"/>
</dbReference>
<dbReference type="GO" id="GO:0016491">
    <property type="term" value="F:oxidoreductase activity"/>
    <property type="evidence" value="ECO:0007669"/>
    <property type="project" value="UniProtKB-KW"/>
</dbReference>
<dbReference type="CDD" id="cd13895">
    <property type="entry name" value="CuRO_3_AAO_like_2"/>
    <property type="match status" value="1"/>
</dbReference>
<dbReference type="Gene3D" id="2.60.40.420">
    <property type="entry name" value="Cupredoxins - blue copper proteins"/>
    <property type="match status" value="3"/>
</dbReference>
<dbReference type="InterPro" id="IPR011707">
    <property type="entry name" value="Cu-oxidase-like_N"/>
</dbReference>
<dbReference type="InterPro" id="IPR001117">
    <property type="entry name" value="Cu-oxidase_2nd"/>
</dbReference>
<dbReference type="InterPro" id="IPR011706">
    <property type="entry name" value="Cu-oxidase_C"/>
</dbReference>
<dbReference type="InterPro" id="IPR045087">
    <property type="entry name" value="Cu-oxidase_fam"/>
</dbReference>
<dbReference type="InterPro" id="IPR033138">
    <property type="entry name" value="Cu_oxidase_CS"/>
</dbReference>
<dbReference type="InterPro" id="IPR002355">
    <property type="entry name" value="Cu_oxidase_Cu_BS"/>
</dbReference>
<dbReference type="InterPro" id="IPR008972">
    <property type="entry name" value="Cupredoxin"/>
</dbReference>
<dbReference type="InterPro" id="IPR035666">
    <property type="entry name" value="MCO_CuRO_3"/>
</dbReference>
<dbReference type="InterPro" id="IPR017762">
    <property type="entry name" value="Multicopper_oxidase_fun"/>
</dbReference>
<dbReference type="NCBIfam" id="TIGR03390">
    <property type="entry name" value="ascorbOXfungal"/>
    <property type="match status" value="1"/>
</dbReference>
<dbReference type="PANTHER" id="PTHR11709:SF394">
    <property type="entry name" value="FI03373P-RELATED"/>
    <property type="match status" value="1"/>
</dbReference>
<dbReference type="PANTHER" id="PTHR11709">
    <property type="entry name" value="MULTI-COPPER OXIDASE"/>
    <property type="match status" value="1"/>
</dbReference>
<dbReference type="Pfam" id="PF00394">
    <property type="entry name" value="Cu-oxidase"/>
    <property type="match status" value="1"/>
</dbReference>
<dbReference type="Pfam" id="PF07731">
    <property type="entry name" value="Cu-oxidase_2"/>
    <property type="match status" value="1"/>
</dbReference>
<dbReference type="Pfam" id="PF07732">
    <property type="entry name" value="Cu-oxidase_3"/>
    <property type="match status" value="1"/>
</dbReference>
<dbReference type="SUPFAM" id="SSF49503">
    <property type="entry name" value="Cupredoxins"/>
    <property type="match status" value="3"/>
</dbReference>
<dbReference type="PROSITE" id="PS00079">
    <property type="entry name" value="MULTICOPPER_OXIDASE1"/>
    <property type="match status" value="1"/>
</dbReference>
<dbReference type="PROSITE" id="PS00080">
    <property type="entry name" value="MULTICOPPER_OXIDASE2"/>
    <property type="match status" value="1"/>
</dbReference>
<protein>
    <recommendedName>
        <fullName evidence="19">Multicopper oxidase terE</fullName>
        <ecNumber evidence="19">1.-.-.-</ecNumber>
    </recommendedName>
    <alternativeName>
        <fullName evidence="17">Terrein biosynthesis cluster protein terE</fullName>
    </alternativeName>
</protein>
<feature type="chain" id="PRO_0000437628" description="Multicopper oxidase terE">
    <location>
        <begin position="1"/>
        <end position="536"/>
    </location>
</feature>
<feature type="domain" description="Plastocyanin-like 1" evidence="2">
    <location>
        <begin position="1"/>
        <end position="67"/>
    </location>
</feature>
<feature type="domain" description="Plastocyanin-like 2" evidence="2">
    <location>
        <begin position="79"/>
        <end position="238"/>
    </location>
</feature>
<feature type="domain" description="Plastocyanin-like 3" evidence="2">
    <location>
        <begin position="354"/>
        <end position="488"/>
    </location>
</feature>
<feature type="region of interest" description="Disordered" evidence="3">
    <location>
        <begin position="1"/>
        <end position="21"/>
    </location>
</feature>
<feature type="binding site" evidence="1">
    <location>
        <position position="2"/>
    </location>
    <ligand>
        <name>Cu cation</name>
        <dbReference type="ChEBI" id="CHEBI:23378"/>
        <label>1</label>
    </ligand>
</feature>
<feature type="binding site" evidence="1">
    <location>
        <position position="4"/>
    </location>
    <ligand>
        <name>Cu cation</name>
        <dbReference type="ChEBI" id="CHEBI:23378"/>
        <label>2</label>
    </ligand>
</feature>
<feature type="binding site" evidence="1">
    <location>
        <position position="48"/>
    </location>
    <ligand>
        <name>Cu cation</name>
        <dbReference type="ChEBI" id="CHEBI:23378"/>
        <label>2</label>
    </ligand>
</feature>
<feature type="binding site" evidence="1">
    <location>
        <position position="50"/>
    </location>
    <ligand>
        <name>Cu cation</name>
        <dbReference type="ChEBI" id="CHEBI:23378"/>
        <label>3</label>
    </ligand>
</feature>
<feature type="binding site" evidence="1">
    <location>
        <position position="397"/>
    </location>
    <ligand>
        <name>Cu cation</name>
        <dbReference type="ChEBI" id="CHEBI:23378"/>
        <label>4</label>
    </ligand>
</feature>
<comment type="function">
    <text evidence="11">Multicopper oxidase; part of the gene cluster that mediates the biosynthesis of terrein, a fungal metabolite with ecological, antimicrobial, antiproliferative, and antioxidative activities (PubMed:24816227). The first step in the pathway is performed by the polyketide synthase terA that produces 4-hydroxy-6-methylpyranon (4-HMP), orsellinic acid (OA), and 2,3-dehydro-6-hydroxymellein (2,3-dehydro-6-HM) by condensing acetyl-CoA with two, three, or four malonyl-CoA units, respectively (PubMed:24816227). 4-HMP and OA are not pathway intermediates, but are rather shunt or side products (PubMed:24816227). 2,3-dehydro-6-HM is further converted to 6-hydroxymellein (6-HM) by the 6-hydroxymellein synthase terB (PubMed:24816227). The monooxygenases terC and terD, the multicopper oxidase terE and the Kelch-like protein terF are then involved in the transformation of 6-HM to terrein (PubMed:24816227). Even if they are co-regulated with the other terrein cluster genes, terH and terI seem to be dispensable for terrein production; whereas one or both of the 2 transporters terG and terJ are probably required for efficient secretion of metabolites (PubMed:24816227).</text>
</comment>
<comment type="pathway">
    <text evidence="11">Secondary metabolite biosynthesis.</text>
</comment>
<comment type="induction">
    <text evidence="14">Expression is under the control of the terrein cluster-specific transcription factor terR (PubMed:25852654).</text>
</comment>
<comment type="disruption phenotype">
    <text evidence="11">Impairs the production of terrein (PubMed:24816227).</text>
</comment>
<comment type="biotechnology">
    <text evidence="4 5 6 7 8 9 10 12 13 15 16">Terrein shows anticancer activity on various tumors including cervical carcinoma, ovarian cancer, and head and neck cancer (PubMed:23417151, PubMed:25318762, PubMed:25592371, PubMed:27127118). The secondary metabolite acts as angiogenesis inhibitors through the inhibition of angiogenin secretion (PubMed:18776656, PubMed:27127118). Terrein also has anti-inflammatory activity (PubMed:18358890). It shows an alleviative function of age-related inflammation characterized as an anti-oxidant and might therefore be a useful nutraceutical compound for anti-aging (PubMed:26416516). Terrein may enhance osseointegration by decreasing the level of ROS and has a potentially synergistic effect on osteoblast differentiation (PubMed:21104936). Terrein has also been shown to act as a melanogenesis inhibitor (PubMed:15558216, PubMed:15603975, PubMed:19493001).</text>
</comment>
<comment type="similarity">
    <text evidence="18">Belongs to the multicopper oxidase family.</text>
</comment>
<evidence type="ECO:0000250" key="1">
    <source>
        <dbReference type="UniProtKB" id="Q70KY3"/>
    </source>
</evidence>
<evidence type="ECO:0000255" key="2"/>
<evidence type="ECO:0000256" key="3">
    <source>
        <dbReference type="SAM" id="MobiDB-lite"/>
    </source>
</evidence>
<evidence type="ECO:0000269" key="4">
    <source>
    </source>
</evidence>
<evidence type="ECO:0000269" key="5">
    <source>
    </source>
</evidence>
<evidence type="ECO:0000269" key="6">
    <source>
    </source>
</evidence>
<evidence type="ECO:0000269" key="7">
    <source>
    </source>
</evidence>
<evidence type="ECO:0000269" key="8">
    <source>
    </source>
</evidence>
<evidence type="ECO:0000269" key="9">
    <source>
    </source>
</evidence>
<evidence type="ECO:0000269" key="10">
    <source>
    </source>
</evidence>
<evidence type="ECO:0000269" key="11">
    <source>
    </source>
</evidence>
<evidence type="ECO:0000269" key="12">
    <source>
    </source>
</evidence>
<evidence type="ECO:0000269" key="13">
    <source>
    </source>
</evidence>
<evidence type="ECO:0000269" key="14">
    <source>
    </source>
</evidence>
<evidence type="ECO:0000269" key="15">
    <source>
    </source>
</evidence>
<evidence type="ECO:0000269" key="16">
    <source>
    </source>
</evidence>
<evidence type="ECO:0000303" key="17">
    <source>
    </source>
</evidence>
<evidence type="ECO:0000305" key="18"/>
<evidence type="ECO:0000305" key="19">
    <source>
    </source>
</evidence>
<accession>Q0D1P3</accession>
<gene>
    <name evidence="17" type="primary">terE</name>
    <name type="ORF">ATEG_00141</name>
</gene>
<sequence length="536" mass="60810">MHWHGLSQSTAPFSDGSPQASQWPIKPGEYFDYEIRPNVGEAGTHFYHSHVGFQAVSAAGPLIVEEKHGKSPPFPYDEERILFISELYNKTDSMTETELLRPYDVVRCFPGMSANETDTPEPWVMPDPSLVESCGPEVIQVDPDKTYRMRVIGGPALNLVTMGFEDHQELSIMAADGKYTKLAKTERIQIASGQRFDFLLHTKTEDELRRLGKSAFWIQMESRYRPMNVSSYALLSYNTPSDLAFNQTTDLVPPEKQPLTLPNKVYDWLEYVLEPLEPNGFPTADKVNRTVVLTSLQLIAKEGVYAAVSNRTWTETNQHRNNTPFWKREHQAGTPYLVDIFRRGDEAIPDYETTVQKHGGWDPDLNVYVAKVGEVIDIIMVNQPNGLDIGFDLHPWHIHGGHIYDLGSGPGSYNATANEEKLKGYNPVIRDTTMLYKYTPGQYVGENKNFTDQGWRAWRLHVQDPGVWMVHCHTLQHMIMGMQTVWMMGNASEITRGVSPESLEGYLNYGGDAYGNASYDPIVQHHFDYGLQQILQ</sequence>
<proteinExistence type="evidence at protein level"/>
<name>TERE_ASPTN</name>